<dbReference type="EMBL" id="CP000269">
    <property type="protein sequence ID" value="ABR88526.1"/>
    <property type="molecule type" value="Genomic_DNA"/>
</dbReference>
<dbReference type="RefSeq" id="WP_012081369.1">
    <property type="nucleotide sequence ID" value="NC_009659.1"/>
</dbReference>
<dbReference type="STRING" id="375286.mma_3533"/>
<dbReference type="KEGG" id="mms:mma_3533"/>
<dbReference type="eggNOG" id="COG3158">
    <property type="taxonomic scope" value="Bacteria"/>
</dbReference>
<dbReference type="HOGENOM" id="CLU_008142_4_2_4"/>
<dbReference type="OrthoDB" id="9805577at2"/>
<dbReference type="Proteomes" id="UP000006388">
    <property type="component" value="Chromosome"/>
</dbReference>
<dbReference type="GO" id="GO:0005886">
    <property type="term" value="C:plasma membrane"/>
    <property type="evidence" value="ECO:0007669"/>
    <property type="project" value="UniProtKB-SubCell"/>
</dbReference>
<dbReference type="GO" id="GO:0015079">
    <property type="term" value="F:potassium ion transmembrane transporter activity"/>
    <property type="evidence" value="ECO:0007669"/>
    <property type="project" value="UniProtKB-UniRule"/>
</dbReference>
<dbReference type="GO" id="GO:0015293">
    <property type="term" value="F:symporter activity"/>
    <property type="evidence" value="ECO:0007669"/>
    <property type="project" value="UniProtKB-UniRule"/>
</dbReference>
<dbReference type="HAMAP" id="MF_01522">
    <property type="entry name" value="Kup"/>
    <property type="match status" value="1"/>
</dbReference>
<dbReference type="InterPro" id="IPR003855">
    <property type="entry name" value="K+_transporter"/>
</dbReference>
<dbReference type="InterPro" id="IPR053952">
    <property type="entry name" value="K_trans_C"/>
</dbReference>
<dbReference type="InterPro" id="IPR053951">
    <property type="entry name" value="K_trans_N"/>
</dbReference>
<dbReference type="InterPro" id="IPR023051">
    <property type="entry name" value="Kup"/>
</dbReference>
<dbReference type="PANTHER" id="PTHR30540:SF79">
    <property type="entry name" value="LOW AFFINITY POTASSIUM TRANSPORT SYSTEM PROTEIN KUP"/>
    <property type="match status" value="1"/>
</dbReference>
<dbReference type="PANTHER" id="PTHR30540">
    <property type="entry name" value="OSMOTIC STRESS POTASSIUM TRANSPORTER"/>
    <property type="match status" value="1"/>
</dbReference>
<dbReference type="Pfam" id="PF02705">
    <property type="entry name" value="K_trans"/>
    <property type="match status" value="1"/>
</dbReference>
<dbReference type="Pfam" id="PF22776">
    <property type="entry name" value="K_trans_C"/>
    <property type="match status" value="1"/>
</dbReference>
<sequence length="625" mass="68397">MASPDKKSSLAALTLAAVGIVYGDIGTSPLYTMKEVFSKEHGLALTPENLLGVVSLIVWGLIIIVSLKYVTLVLRANNRGEGGIMALMALALSSVTRNSRWYFPLLVMGLFGATLFYGDSVITPAISVLSAIEGLSVATETFDPYVVPLTVAVLVGLYSVQARGTAGIGKWFGPIMVVWFATLAVMGVVNIIDAPEILYALNPWHALHFLDGNRFLAFIALGAVVLAFTGAEALYADMGHFGAKPIRMAWFLVAFPALALNYLGQGALLLMHPDAVTNPFYQQLGAWSIYPLVALSTMAAIIASQATISGTFSMTKQAIALGFLPRMKIEFTSASQIGQIYIPAVNWLQMAVVVMAVVGFGSSSDLAAAYGIAVTATMLVTTILTFFVIRYRWKYNLLLCLASTGFFLVIDLSLFSANMLKLFHGGWFPLLLGTILFTLMLTWKRGRELVFENLQKHAIPLEDFLASLFISPPTRVPGTAIFLRGESDGVPHAMLHNLSHNKVLHERVVFLTVRMMEVPYVPTTDQVRIHLLGDDCYQMDVTYGFKNVPDIPAALELAKDQGLEFEMMETSFFIARQTVVANPVRGMALWREHIFVAMSRHARGAADYYQIPSNRVIELGTKVEI</sequence>
<protein>
    <recommendedName>
        <fullName evidence="1">Probable potassium transport system protein Kup</fullName>
    </recommendedName>
</protein>
<reference key="1">
    <citation type="journal article" date="2007" name="PLoS Genet.">
        <title>Genome analysis of Minibacterium massiliensis highlights the convergent evolution of water-living bacteria.</title>
        <authorList>
            <person name="Audic S."/>
            <person name="Robert C."/>
            <person name="Campagna B."/>
            <person name="Parinello H."/>
            <person name="Claverie J.-M."/>
            <person name="Raoult D."/>
            <person name="Drancourt M."/>
        </authorList>
    </citation>
    <scope>NUCLEOTIDE SEQUENCE [LARGE SCALE GENOMIC DNA]</scope>
    <source>
        <strain>Marseille</strain>
    </source>
</reference>
<feature type="chain" id="PRO_0000315984" description="Probable potassium transport system protein Kup">
    <location>
        <begin position="1"/>
        <end position="625"/>
    </location>
</feature>
<feature type="transmembrane region" description="Helical" evidence="1">
    <location>
        <begin position="10"/>
        <end position="30"/>
    </location>
</feature>
<feature type="transmembrane region" description="Helical" evidence="1">
    <location>
        <begin position="50"/>
        <end position="70"/>
    </location>
</feature>
<feature type="transmembrane region" description="Helical" evidence="1">
    <location>
        <begin position="102"/>
        <end position="122"/>
    </location>
</feature>
<feature type="transmembrane region" description="Helical" evidence="1">
    <location>
        <begin position="142"/>
        <end position="162"/>
    </location>
</feature>
<feature type="transmembrane region" description="Helical" evidence="1">
    <location>
        <begin position="172"/>
        <end position="192"/>
    </location>
</feature>
<feature type="transmembrane region" description="Helical" evidence="1">
    <location>
        <begin position="215"/>
        <end position="235"/>
    </location>
</feature>
<feature type="transmembrane region" description="Helical" evidence="1">
    <location>
        <begin position="250"/>
        <end position="270"/>
    </location>
</feature>
<feature type="transmembrane region" description="Helical" evidence="1">
    <location>
        <begin position="284"/>
        <end position="304"/>
    </location>
</feature>
<feature type="transmembrane region" description="Helical" evidence="1">
    <location>
        <begin position="340"/>
        <end position="360"/>
    </location>
</feature>
<feature type="transmembrane region" description="Helical" evidence="1">
    <location>
        <begin position="369"/>
        <end position="389"/>
    </location>
</feature>
<feature type="transmembrane region" description="Helical" evidence="1">
    <location>
        <begin position="397"/>
        <end position="417"/>
    </location>
</feature>
<feature type="transmembrane region" description="Helical" evidence="1">
    <location>
        <begin position="422"/>
        <end position="442"/>
    </location>
</feature>
<name>KUP_JANMA</name>
<keyword id="KW-0997">Cell inner membrane</keyword>
<keyword id="KW-1003">Cell membrane</keyword>
<keyword id="KW-0406">Ion transport</keyword>
<keyword id="KW-0472">Membrane</keyword>
<keyword id="KW-0630">Potassium</keyword>
<keyword id="KW-0633">Potassium transport</keyword>
<keyword id="KW-0769">Symport</keyword>
<keyword id="KW-0812">Transmembrane</keyword>
<keyword id="KW-1133">Transmembrane helix</keyword>
<keyword id="KW-0813">Transport</keyword>
<accession>A6T3X6</accession>
<organism>
    <name type="scientific">Janthinobacterium sp. (strain Marseille)</name>
    <name type="common">Minibacterium massiliensis</name>
    <dbReference type="NCBI Taxonomy" id="375286"/>
    <lineage>
        <taxon>Bacteria</taxon>
        <taxon>Pseudomonadati</taxon>
        <taxon>Pseudomonadota</taxon>
        <taxon>Betaproteobacteria</taxon>
        <taxon>Burkholderiales</taxon>
        <taxon>Oxalobacteraceae</taxon>
        <taxon>Janthinobacterium</taxon>
    </lineage>
</organism>
<gene>
    <name evidence="1" type="primary">kup</name>
    <name type="ordered locus">mma_3533</name>
</gene>
<proteinExistence type="inferred from homology"/>
<evidence type="ECO:0000255" key="1">
    <source>
        <dbReference type="HAMAP-Rule" id="MF_01522"/>
    </source>
</evidence>
<comment type="function">
    <text evidence="1">Transport of potassium into the cell. Likely operates as a K(+):H(+) symporter.</text>
</comment>
<comment type="catalytic activity">
    <reaction evidence="1">
        <text>K(+)(in) + H(+)(in) = K(+)(out) + H(+)(out)</text>
        <dbReference type="Rhea" id="RHEA:28490"/>
        <dbReference type="ChEBI" id="CHEBI:15378"/>
        <dbReference type="ChEBI" id="CHEBI:29103"/>
    </reaction>
    <physiologicalReaction direction="right-to-left" evidence="1">
        <dbReference type="Rhea" id="RHEA:28492"/>
    </physiologicalReaction>
</comment>
<comment type="subcellular location">
    <subcellularLocation>
        <location evidence="1">Cell inner membrane</location>
        <topology evidence="1">Multi-pass membrane protein</topology>
    </subcellularLocation>
</comment>
<comment type="similarity">
    <text evidence="1">Belongs to the HAK/KUP transporter (TC 2.A.72) family.</text>
</comment>